<proteinExistence type="inferred from homology"/>
<accession>Q8EPT0</accession>
<evidence type="ECO:0000255" key="1">
    <source>
        <dbReference type="HAMAP-Rule" id="MF_01507"/>
    </source>
</evidence>
<organism>
    <name type="scientific">Oceanobacillus iheyensis (strain DSM 14371 / CIP 107618 / JCM 11309 / KCTC 3954 / HTE831)</name>
    <dbReference type="NCBI Taxonomy" id="221109"/>
    <lineage>
        <taxon>Bacteria</taxon>
        <taxon>Bacillati</taxon>
        <taxon>Bacillota</taxon>
        <taxon>Bacilli</taxon>
        <taxon>Bacillales</taxon>
        <taxon>Bacillaceae</taxon>
        <taxon>Oceanobacillus</taxon>
    </lineage>
</organism>
<gene>
    <name type="ordered locus">OB2008</name>
</gene>
<name>Y2008_OCEIH</name>
<dbReference type="EMBL" id="BA000028">
    <property type="protein sequence ID" value="BAC13964.1"/>
    <property type="molecule type" value="Genomic_DNA"/>
</dbReference>
<dbReference type="RefSeq" id="WP_011066404.1">
    <property type="nucleotide sequence ID" value="NC_004193.1"/>
</dbReference>
<dbReference type="SMR" id="Q8EPT0"/>
<dbReference type="STRING" id="221109.gene:10734254"/>
<dbReference type="KEGG" id="oih:OB2008"/>
<dbReference type="eggNOG" id="COG4472">
    <property type="taxonomic scope" value="Bacteria"/>
</dbReference>
<dbReference type="HOGENOM" id="CLU_162466_0_0_9"/>
<dbReference type="OrthoDB" id="9796303at2"/>
<dbReference type="PhylomeDB" id="Q8EPT0"/>
<dbReference type="Proteomes" id="UP000000822">
    <property type="component" value="Chromosome"/>
</dbReference>
<dbReference type="HAMAP" id="MF_01507">
    <property type="entry name" value="UPF0297"/>
    <property type="match status" value="1"/>
</dbReference>
<dbReference type="InterPro" id="IPR009309">
    <property type="entry name" value="IreB"/>
</dbReference>
<dbReference type="NCBIfam" id="NF003997">
    <property type="entry name" value="PRK05473.1"/>
    <property type="match status" value="1"/>
</dbReference>
<dbReference type="PANTHER" id="PTHR40067">
    <property type="entry name" value="UPF0297 PROTEIN YRZL"/>
    <property type="match status" value="1"/>
</dbReference>
<dbReference type="PANTHER" id="PTHR40067:SF1">
    <property type="entry name" value="UPF0297 PROTEIN YRZL"/>
    <property type="match status" value="1"/>
</dbReference>
<dbReference type="Pfam" id="PF06135">
    <property type="entry name" value="IreB"/>
    <property type="match status" value="1"/>
</dbReference>
<dbReference type="PIRSF" id="PIRSF037258">
    <property type="entry name" value="DUF965_bac"/>
    <property type="match status" value="1"/>
</dbReference>
<feature type="chain" id="PRO_0000216976" description="UPF0297 protein OB2008">
    <location>
        <begin position="1"/>
        <end position="89"/>
    </location>
</feature>
<protein>
    <recommendedName>
        <fullName evidence="1">UPF0297 protein OB2008</fullName>
    </recommendedName>
</protein>
<reference key="1">
    <citation type="journal article" date="2002" name="Nucleic Acids Res.">
        <title>Genome sequence of Oceanobacillus iheyensis isolated from the Iheya Ridge and its unexpected adaptive capabilities to extreme environments.</title>
        <authorList>
            <person name="Takami H."/>
            <person name="Takaki Y."/>
            <person name="Uchiyama I."/>
        </authorList>
    </citation>
    <scope>NUCLEOTIDE SEQUENCE [LARGE SCALE GENOMIC DNA]</scope>
    <source>
        <strain>DSM 14371 / CIP 107618 / JCM 11309 / KCTC 3954 / HTE831</strain>
    </source>
</reference>
<keyword id="KW-1185">Reference proteome</keyword>
<sequence length="89" mass="10573">MSSIDKTMKFNFSEEPFDQDIKEILMTVHESLQEKGYNPINQIVGYLLSGDPAYIPRYNDARNLIRKVERDEVIEELVKFYLEQNRETK</sequence>
<comment type="similarity">
    <text evidence="1">Belongs to the UPF0297 family.</text>
</comment>